<comment type="function">
    <text evidence="4">Odorant receptor.</text>
</comment>
<comment type="subcellular location">
    <subcellularLocation>
        <location>Cell membrane</location>
        <topology>Multi-pass membrane protein</topology>
    </subcellularLocation>
</comment>
<comment type="similarity">
    <text evidence="2">Belongs to the G-protein coupled receptor 1 family.</text>
</comment>
<comment type="online information" name="Human Olfactory Receptor Data Exploratorium (HORDE)">
    <link uri="http://genome.weizmann.ac.il/horde/card/index/symbol:OR52N2"/>
</comment>
<feature type="chain" id="PRO_0000150787" description="Olfactory receptor 52N2">
    <location>
        <begin position="1"/>
        <end position="321"/>
    </location>
</feature>
<feature type="topological domain" description="Extracellular" evidence="1">
    <location>
        <begin position="1"/>
        <end position="27"/>
    </location>
</feature>
<feature type="transmembrane region" description="Helical; Name=1" evidence="1">
    <location>
        <begin position="28"/>
        <end position="48"/>
    </location>
</feature>
<feature type="topological domain" description="Cytoplasmic" evidence="1">
    <location>
        <begin position="49"/>
        <end position="56"/>
    </location>
</feature>
<feature type="transmembrane region" description="Helical; Name=2" evidence="1">
    <location>
        <begin position="57"/>
        <end position="77"/>
    </location>
</feature>
<feature type="topological domain" description="Extracellular" evidence="1">
    <location>
        <begin position="78"/>
        <end position="101"/>
    </location>
</feature>
<feature type="transmembrane region" description="Helical; Name=3" evidence="1">
    <location>
        <begin position="102"/>
        <end position="122"/>
    </location>
</feature>
<feature type="topological domain" description="Cytoplasmic" evidence="1">
    <location>
        <begin position="123"/>
        <end position="141"/>
    </location>
</feature>
<feature type="transmembrane region" description="Helical; Name=4" evidence="1">
    <location>
        <begin position="142"/>
        <end position="162"/>
    </location>
</feature>
<feature type="topological domain" description="Extracellular" evidence="1">
    <location>
        <begin position="163"/>
        <end position="198"/>
    </location>
</feature>
<feature type="transmembrane region" description="Helical; Name=5" evidence="1">
    <location>
        <begin position="199"/>
        <end position="219"/>
    </location>
</feature>
<feature type="topological domain" description="Cytoplasmic" evidence="1">
    <location>
        <begin position="220"/>
        <end position="239"/>
    </location>
</feature>
<feature type="transmembrane region" description="Helical; Name=6" evidence="1">
    <location>
        <begin position="240"/>
        <end position="260"/>
    </location>
</feature>
<feature type="topological domain" description="Extracellular" evidence="1">
    <location>
        <begin position="261"/>
        <end position="276"/>
    </location>
</feature>
<feature type="transmembrane region" description="Helical; Name=7" evidence="1">
    <location>
        <begin position="277"/>
        <end position="297"/>
    </location>
</feature>
<feature type="topological domain" description="Cytoplasmic" evidence="1">
    <location>
        <begin position="298"/>
        <end position="321"/>
    </location>
</feature>
<feature type="glycosylation site" description="N-linked (GlcNAc...) asparagine" evidence="1">
    <location>
        <position position="5"/>
    </location>
</feature>
<feature type="disulfide bond" evidence="2">
    <location>
        <begin position="99"/>
        <end position="191"/>
    </location>
</feature>
<feature type="sequence variant" id="VAR_024150" description="In dbSNP:rs8181529." evidence="3">
    <original>S</original>
    <variation>A</variation>
    <location>
        <position position="249"/>
    </location>
</feature>
<feature type="sequence variant" id="VAR_024151" description="In dbSNP:rs8181512." evidence="3">
    <original>H</original>
    <variation>R</variation>
    <location>
        <position position="264"/>
    </location>
</feature>
<gene>
    <name type="primary">OR52N2</name>
</gene>
<protein>
    <recommendedName>
        <fullName>Olfactory receptor 52N2</fullName>
    </recommendedName>
    <alternativeName>
        <fullName>Olfactory receptor OR11-57</fullName>
    </alternativeName>
</protein>
<proteinExistence type="evidence at transcript level"/>
<reference key="1">
    <citation type="submission" date="2001-07" db="EMBL/GenBank/DDBJ databases">
        <title>Genome-wide discovery and analysis of human seven transmembrane helix receptor genes.</title>
        <authorList>
            <person name="Suwa M."/>
            <person name="Sato T."/>
            <person name="Okouchi I."/>
            <person name="Arita M."/>
            <person name="Futami K."/>
            <person name="Matsumoto S."/>
            <person name="Tsutsumi S."/>
            <person name="Aburatani H."/>
            <person name="Asai K."/>
            <person name="Akiyama Y."/>
        </authorList>
    </citation>
    <scope>NUCLEOTIDE SEQUENCE [GENOMIC DNA]</scope>
</reference>
<reference key="2">
    <citation type="submission" date="2005-09" db="EMBL/GenBank/DDBJ databases">
        <authorList>
            <person name="Mural R.J."/>
            <person name="Istrail S."/>
            <person name="Sutton G.G."/>
            <person name="Florea L."/>
            <person name="Halpern A.L."/>
            <person name="Mobarry C.M."/>
            <person name="Lippert R."/>
            <person name="Walenz B."/>
            <person name="Shatkay H."/>
            <person name="Dew I."/>
            <person name="Miller J.R."/>
            <person name="Flanigan M.J."/>
            <person name="Edwards N.J."/>
            <person name="Bolanos R."/>
            <person name="Fasulo D."/>
            <person name="Halldorsson B.V."/>
            <person name="Hannenhalli S."/>
            <person name="Turner R."/>
            <person name="Yooseph S."/>
            <person name="Lu F."/>
            <person name="Nusskern D.R."/>
            <person name="Shue B.C."/>
            <person name="Zheng X.H."/>
            <person name="Zhong F."/>
            <person name="Delcher A.L."/>
            <person name="Huson D.H."/>
            <person name="Kravitz S.A."/>
            <person name="Mouchard L."/>
            <person name="Reinert K."/>
            <person name="Remington K.A."/>
            <person name="Clark A.G."/>
            <person name="Waterman M.S."/>
            <person name="Eichler E.E."/>
            <person name="Adams M.D."/>
            <person name="Hunkapiller M.W."/>
            <person name="Myers E.W."/>
            <person name="Venter J.C."/>
        </authorList>
    </citation>
    <scope>NUCLEOTIDE SEQUENCE [LARGE SCALE GENOMIC DNA]</scope>
</reference>
<reference key="3">
    <citation type="journal article" date="2004" name="Genome Res.">
        <title>The status, quality, and expansion of the NIH full-length cDNA project: the Mammalian Gene Collection (MGC).</title>
        <authorList>
            <consortium name="The MGC Project Team"/>
        </authorList>
    </citation>
    <scope>NUCLEOTIDE SEQUENCE [LARGE SCALE MRNA]</scope>
    <scope>VARIANTS ALA-249 AND ARG-264</scope>
</reference>
<reference key="4">
    <citation type="journal article" date="2004" name="Proc. Natl. Acad. Sci. U.S.A.">
        <title>The human olfactory receptor gene family.</title>
        <authorList>
            <person name="Malnic B."/>
            <person name="Godfrey P.A."/>
            <person name="Buck L.B."/>
        </authorList>
    </citation>
    <scope>IDENTIFICATION</scope>
</reference>
<reference key="5">
    <citation type="journal article" date="2004" name="Proc. Natl. Acad. Sci. U.S.A.">
        <authorList>
            <person name="Malnic B."/>
            <person name="Godfrey P.A."/>
            <person name="Buck L.B."/>
        </authorList>
    </citation>
    <scope>ERRATUM OF PUBMED:14983052</scope>
</reference>
<evidence type="ECO:0000255" key="1"/>
<evidence type="ECO:0000255" key="2">
    <source>
        <dbReference type="PROSITE-ProRule" id="PRU00521"/>
    </source>
</evidence>
<evidence type="ECO:0000269" key="3">
    <source>
    </source>
</evidence>
<evidence type="ECO:0000305" key="4"/>
<accession>Q8NGI0</accession>
<accession>B9EIL8</accession>
<accession>Q6IFF9</accession>
<keyword id="KW-1003">Cell membrane</keyword>
<keyword id="KW-1015">Disulfide bond</keyword>
<keyword id="KW-0297">G-protein coupled receptor</keyword>
<keyword id="KW-0325">Glycoprotein</keyword>
<keyword id="KW-0472">Membrane</keyword>
<keyword id="KW-0552">Olfaction</keyword>
<keyword id="KW-0675">Receptor</keyword>
<keyword id="KW-1185">Reference proteome</keyword>
<keyword id="KW-0716">Sensory transduction</keyword>
<keyword id="KW-0807">Transducer</keyword>
<keyword id="KW-0812">Transmembrane</keyword>
<keyword id="KW-1133">Transmembrane helix</keyword>
<sequence>MSGDNSSSLTPGFFILNGVPGLEATHIWISLPFCFMYIIAVVGNCGLICLISHEEALHRPMYYFLALLSFTDVTLCTTMVPNMLCIFWFNLKEIDFNACLAQMFFVHMLTGMESGVLMLMALDRYVAICYPLRYATILTNPVIAKAGLATFLRNVMLIIPFTLLTKRLPYCRGNFIPHTYCDHMSVAKVSCGNFKVNAIYGLMVALLIGVFDICCISVSYTMILQAVMSLSSADARHKAFSTCTSHMCSIVITYVAAFFTFFTHRFVGHNIPNHIHIIVANLYLLLPPTMNPIVYGVKTKQIQEGVIKFLLGDKVSFTYDK</sequence>
<organism>
    <name type="scientific">Homo sapiens</name>
    <name type="common">Human</name>
    <dbReference type="NCBI Taxonomy" id="9606"/>
    <lineage>
        <taxon>Eukaryota</taxon>
        <taxon>Metazoa</taxon>
        <taxon>Chordata</taxon>
        <taxon>Craniata</taxon>
        <taxon>Vertebrata</taxon>
        <taxon>Euteleostomi</taxon>
        <taxon>Mammalia</taxon>
        <taxon>Eutheria</taxon>
        <taxon>Euarchontoglires</taxon>
        <taxon>Primates</taxon>
        <taxon>Haplorrhini</taxon>
        <taxon>Catarrhini</taxon>
        <taxon>Hominidae</taxon>
        <taxon>Homo</taxon>
    </lineage>
</organism>
<name>O52N2_HUMAN</name>
<dbReference type="EMBL" id="AB065816">
    <property type="protein sequence ID" value="BAC06035.1"/>
    <property type="molecule type" value="Genomic_DNA"/>
</dbReference>
<dbReference type="EMBL" id="CH471064">
    <property type="protein sequence ID" value="EAW68759.1"/>
    <property type="molecule type" value="Genomic_DNA"/>
</dbReference>
<dbReference type="EMBL" id="BC140732">
    <property type="protein sequence ID" value="AAI40733.1"/>
    <property type="molecule type" value="mRNA"/>
</dbReference>
<dbReference type="EMBL" id="BK004303">
    <property type="protein sequence ID" value="DAA04701.1"/>
    <property type="molecule type" value="Genomic_DNA"/>
</dbReference>
<dbReference type="CCDS" id="CCDS31399.1"/>
<dbReference type="RefSeq" id="NP_001005174.1">
    <property type="nucleotide sequence ID" value="NM_001005174.3"/>
</dbReference>
<dbReference type="RefSeq" id="XP_011518392.1">
    <property type="nucleotide sequence ID" value="XM_011520090.2"/>
</dbReference>
<dbReference type="SMR" id="Q8NGI0"/>
<dbReference type="FunCoup" id="Q8NGI0">
    <property type="interactions" value="475"/>
</dbReference>
<dbReference type="STRING" id="9606.ENSP00000322801"/>
<dbReference type="GlyCosmos" id="Q8NGI0">
    <property type="glycosylation" value="1 site, No reported glycans"/>
</dbReference>
<dbReference type="GlyGen" id="Q8NGI0">
    <property type="glycosylation" value="1 site"/>
</dbReference>
<dbReference type="PhosphoSitePlus" id="Q8NGI0"/>
<dbReference type="BioMuta" id="OR52N2"/>
<dbReference type="DMDM" id="38372698"/>
<dbReference type="PaxDb" id="9606-ENSP00000322801"/>
<dbReference type="ProteomicsDB" id="73517"/>
<dbReference type="Antibodypedia" id="77885">
    <property type="antibodies" value="11 antibodies from 8 providers"/>
</dbReference>
<dbReference type="DNASU" id="390077"/>
<dbReference type="Ensembl" id="ENST00000317037.3">
    <property type="protein sequence ID" value="ENSP00000322801.2"/>
    <property type="gene ID" value="ENSG00000180988.3"/>
</dbReference>
<dbReference type="GeneID" id="390077"/>
<dbReference type="KEGG" id="hsa:390077"/>
<dbReference type="MANE-Select" id="ENST00000317037.3">
    <property type="protein sequence ID" value="ENSP00000322801.2"/>
    <property type="RefSeq nucleotide sequence ID" value="NM_001005174.3"/>
    <property type="RefSeq protein sequence ID" value="NP_001005174.1"/>
</dbReference>
<dbReference type="UCSC" id="uc010qzp.3">
    <property type="organism name" value="human"/>
</dbReference>
<dbReference type="AGR" id="HGNC:15228"/>
<dbReference type="CTD" id="390077"/>
<dbReference type="GeneCards" id="OR52N2"/>
<dbReference type="HGNC" id="HGNC:15228">
    <property type="gene designation" value="OR52N2"/>
</dbReference>
<dbReference type="HPA" id="ENSG00000180988">
    <property type="expression patterns" value="Not detected"/>
</dbReference>
<dbReference type="neXtProt" id="NX_Q8NGI0"/>
<dbReference type="PharmGKB" id="PA32426"/>
<dbReference type="VEuPathDB" id="HostDB:ENSG00000180988"/>
<dbReference type="eggNOG" id="ENOG502QV28">
    <property type="taxonomic scope" value="Eukaryota"/>
</dbReference>
<dbReference type="GeneTree" id="ENSGT01130000278278"/>
<dbReference type="HOGENOM" id="CLU_012526_0_0_1"/>
<dbReference type="InParanoid" id="Q8NGI0"/>
<dbReference type="OMA" id="HMCAIVI"/>
<dbReference type="OrthoDB" id="5969463at2759"/>
<dbReference type="PAN-GO" id="Q8NGI0">
    <property type="GO annotations" value="0 GO annotations based on evolutionary models"/>
</dbReference>
<dbReference type="PhylomeDB" id="Q8NGI0"/>
<dbReference type="TreeFam" id="TF343679"/>
<dbReference type="PathwayCommons" id="Q8NGI0"/>
<dbReference type="Reactome" id="R-HSA-9752946">
    <property type="pathway name" value="Expression and translocation of olfactory receptors"/>
</dbReference>
<dbReference type="BioGRID-ORCS" id="390077">
    <property type="hits" value="7 hits in 743 CRISPR screens"/>
</dbReference>
<dbReference type="GeneWiki" id="OR52N2"/>
<dbReference type="GenomeRNAi" id="390077"/>
<dbReference type="Pharos" id="Q8NGI0">
    <property type="development level" value="Tdark"/>
</dbReference>
<dbReference type="PRO" id="PR:Q8NGI0"/>
<dbReference type="Proteomes" id="UP000005640">
    <property type="component" value="Chromosome 11"/>
</dbReference>
<dbReference type="RNAct" id="Q8NGI0">
    <property type="molecule type" value="protein"/>
</dbReference>
<dbReference type="Bgee" id="ENSG00000180988">
    <property type="expression patterns" value="Expressed in male germ line stem cell (sensu Vertebrata) in testis and 25 other cell types or tissues"/>
</dbReference>
<dbReference type="GO" id="GO:0005886">
    <property type="term" value="C:plasma membrane"/>
    <property type="evidence" value="ECO:0000318"/>
    <property type="project" value="GO_Central"/>
</dbReference>
<dbReference type="GO" id="GO:0004930">
    <property type="term" value="F:G protein-coupled receptor activity"/>
    <property type="evidence" value="ECO:0007669"/>
    <property type="project" value="UniProtKB-KW"/>
</dbReference>
<dbReference type="GO" id="GO:0004984">
    <property type="term" value="F:olfactory receptor activity"/>
    <property type="evidence" value="ECO:0000318"/>
    <property type="project" value="GO_Central"/>
</dbReference>
<dbReference type="CDD" id="cd15954">
    <property type="entry name" value="7tmA_OR52N-like"/>
    <property type="match status" value="1"/>
</dbReference>
<dbReference type="FunFam" id="1.20.1070.10:FF:000006">
    <property type="entry name" value="Olfactory receptor"/>
    <property type="match status" value="1"/>
</dbReference>
<dbReference type="Gene3D" id="1.20.1070.10">
    <property type="entry name" value="Rhodopsin 7-helix transmembrane proteins"/>
    <property type="match status" value="1"/>
</dbReference>
<dbReference type="InterPro" id="IPR000276">
    <property type="entry name" value="GPCR_Rhodpsn"/>
</dbReference>
<dbReference type="InterPro" id="IPR017452">
    <property type="entry name" value="GPCR_Rhodpsn_7TM"/>
</dbReference>
<dbReference type="InterPro" id="IPR000725">
    <property type="entry name" value="Olfact_rcpt"/>
</dbReference>
<dbReference type="InterPro" id="IPR050402">
    <property type="entry name" value="OR51/52/56-like"/>
</dbReference>
<dbReference type="PANTHER" id="PTHR26450:SF161">
    <property type="entry name" value="OLFACTORY RECEPTOR 52N2"/>
    <property type="match status" value="1"/>
</dbReference>
<dbReference type="PANTHER" id="PTHR26450">
    <property type="entry name" value="OLFACTORY RECEPTOR 56B1-RELATED"/>
    <property type="match status" value="1"/>
</dbReference>
<dbReference type="Pfam" id="PF13853">
    <property type="entry name" value="7tm_4"/>
    <property type="match status" value="1"/>
</dbReference>
<dbReference type="PRINTS" id="PR00237">
    <property type="entry name" value="GPCRRHODOPSN"/>
</dbReference>
<dbReference type="PRINTS" id="PR00245">
    <property type="entry name" value="OLFACTORYR"/>
</dbReference>
<dbReference type="SUPFAM" id="SSF81321">
    <property type="entry name" value="Family A G protein-coupled receptor-like"/>
    <property type="match status" value="1"/>
</dbReference>
<dbReference type="PROSITE" id="PS00237">
    <property type="entry name" value="G_PROTEIN_RECEP_F1_1"/>
    <property type="match status" value="1"/>
</dbReference>
<dbReference type="PROSITE" id="PS50262">
    <property type="entry name" value="G_PROTEIN_RECEP_F1_2"/>
    <property type="match status" value="1"/>
</dbReference>